<reference key="1">
    <citation type="journal article" date="2013" name="PLoS Genet.">
        <title>Comparative genome structure, secondary metabolite, and effector coding capacity across Cochliobolus pathogens.</title>
        <authorList>
            <person name="Condon B.J."/>
            <person name="Leng Y."/>
            <person name="Wu D."/>
            <person name="Bushley K.E."/>
            <person name="Ohm R.A."/>
            <person name="Otillar R."/>
            <person name="Martin J."/>
            <person name="Schackwitz W."/>
            <person name="Grimwood J."/>
            <person name="MohdZainudin N."/>
            <person name="Xue C."/>
            <person name="Wang R."/>
            <person name="Manning V.A."/>
            <person name="Dhillon B."/>
            <person name="Tu Z.J."/>
            <person name="Steffenson B.J."/>
            <person name="Salamov A."/>
            <person name="Sun H."/>
            <person name="Lowry S."/>
            <person name="LaButti K."/>
            <person name="Han J."/>
            <person name="Copeland A."/>
            <person name="Lindquist E."/>
            <person name="Barry K."/>
            <person name="Schmutz J."/>
            <person name="Baker S.E."/>
            <person name="Ciuffetti L.M."/>
            <person name="Grigoriev I.V."/>
            <person name="Zhong S."/>
            <person name="Turgeon B.G."/>
        </authorList>
    </citation>
    <scope>NUCLEOTIDE SEQUENCE [LARGE SCALE GENOMIC DNA] OF 1-55</scope>
    <source>
        <strain>FI3</strain>
    </source>
</reference>
<reference key="2">
    <citation type="journal article" date="2020" name="Proc. Natl. Acad. Sci. U.S.A.">
        <title>Victorin, the host-selective cyclic peptide toxin from the oat pathogen Cochliobolus victoriae, is ribosomally encoded.</title>
        <authorList>
            <person name="Kessler S.C."/>
            <person name="Zhang X."/>
            <person name="McDonald M.C."/>
            <person name="Gilchrist C.L.M."/>
            <person name="Lin Z."/>
            <person name="Rightmyer A."/>
            <person name="Solomon P.S."/>
            <person name="Turgeon B.G."/>
            <person name="Chooi Y.H."/>
        </authorList>
    </citation>
    <scope>FUNCTION</scope>
    <scope>DISRUPTION PHENOTYPE</scope>
    <scope>POST-TRANSLATIONAL MODIFICATIONS TO YIELD VICTORIN</scope>
    <scope>PATHWAY</scope>
</reference>
<protein>
    <recommendedName>
        <fullName evidence="2">Ribosomally synthesized cyclic peptide victorin precursosr vicA1</fullName>
    </recommendedName>
    <alternativeName>
        <fullName evidence="2">Victorin biosynthesis cluster protein A1</fullName>
    </alternativeName>
    <component>
        <recommendedName>
            <fullName evidence="2">GLKLAF-I</fullName>
        </recommendedName>
    </component>
    <component>
        <recommendedName>
            <fullName evidence="2">GLKLAF-II</fullName>
        </recommendedName>
    </component>
    <component>
        <recommendedName>
            <fullName evidence="2">GLKLAF-III</fullName>
        </recommendedName>
    </component>
    <component>
        <recommendedName>
            <fullName evidence="2">GLKLAF-IV</fullName>
        </recommendedName>
    </component>
    <component>
        <recommendedName>
            <fullName evidence="2">GLKLAF-V</fullName>
        </recommendedName>
    </component>
    <component>
        <recommendedName>
            <fullName evidence="2">GLKLAF-VI</fullName>
        </recommendedName>
    </component>
    <component>
        <recommendedName>
            <fullName evidence="2">GLKLAF-VII</fullName>
        </recommendedName>
    </component>
</protein>
<proteinExistence type="predicted"/>
<accession>W7DQ33</accession>
<organism>
    <name type="scientific">Bipolaris victoriae (strain FI3)</name>
    <name type="common">Victoria blight of oats agent</name>
    <name type="synonym">Cochliobolus victoriae</name>
    <dbReference type="NCBI Taxonomy" id="930091"/>
    <lineage>
        <taxon>Eukaryota</taxon>
        <taxon>Fungi</taxon>
        <taxon>Dikarya</taxon>
        <taxon>Ascomycota</taxon>
        <taxon>Pezizomycotina</taxon>
        <taxon>Dothideomycetes</taxon>
        <taxon>Pleosporomycetidae</taxon>
        <taxon>Pleosporales</taxon>
        <taxon>Pleosporineae</taxon>
        <taxon>Pleosporaceae</taxon>
        <taxon>Bipolaris</taxon>
    </lineage>
</organism>
<sequence>MVRITALMSGSILLFALQALAMPVETTSVEPAAEKRGLKLAFKRGEEVEPAEEKRGLKLAFKRGEEVEPAEEKRGLKLAFKRGEEVEPAEEKRGLKLAFKRGEEVEPAEEKRGLKLAFKRGEEVEPAEEKRGLKLAFKRGEEVEPAEEKRGLKLAF</sequence>
<evidence type="ECO:0000269" key="1">
    <source>
    </source>
</evidence>
<evidence type="ECO:0000303" key="2">
    <source>
    </source>
</evidence>
<evidence type="ECO:0000305" key="3">
    <source>
    </source>
</evidence>
<comment type="function">
    <text evidence="1">Ribosomally synthesized cyclic peptide victorin precursor, part of the gene cluster that mediates the biosynthesis of the secondary metabolite victorin, the molecular basis for Victoria blight of oats (PubMed:32929037). The vicA1 translated product contains a 7-fold repeated peptide embedding the hexapeptide Gly-Leu-Lys-Leu-Ala-Phe, that is converted into the cyclic victorin (PubMed:32929037).</text>
</comment>
<comment type="pathway">
    <text evidence="1">Mycotoxin biosynthesis.</text>
</comment>
<comment type="PTM">
    <text evidence="1 3">VicA1 is processed by several endopeptidases including kexin proteases as well as the cluster-specific peptidases vicP1 and vicP2 to produce 7 identical copies of the hexapeptide Gly-Leu-Lys-Leu-Ala-Phe, that are further modified to yield victorins (Probable). After being excised from the precursor peptide, the core peptides are cyclized and modified post-translationally by enzymes encoded within the gene cluster (PubMed:32929037). The ustYa family protein vicYb is required for the formation of the macrocycle in victorin and the copper amine oxidases (CAOs) vicK1 and vicK2 are responsible for converting victorin to the active form by oxidizing the N-terminal glycyl residue in the peptides to glyoxylate (PubMed:32929037). Relaxed substrate specificity of enzymes in the victorin biosynthetic pathway results in a metabolic grid that produces a set of analogs including victorinines B, C, E or HV-toxin M (PubMed:32929037).</text>
</comment>
<comment type="disruption phenotype">
    <text evidence="1">Abolishes the production of victorins.</text>
</comment>
<keyword id="KW-0677">Repeat</keyword>
<keyword id="KW-0732">Signal</keyword>
<keyword id="KW-0843">Virulence</keyword>
<feature type="signal peptide" evidence="3">
    <location>
        <begin position="1"/>
        <end position="21"/>
    </location>
</feature>
<feature type="propeptide" id="PRO_0000458279" evidence="3">
    <location>
        <begin position="22"/>
        <end position="36"/>
    </location>
</feature>
<feature type="peptide" id="PRO_5004893196" description="GLKLAF-I" evidence="3">
    <location>
        <begin position="37"/>
        <end position="42"/>
    </location>
</feature>
<feature type="propeptide" id="PRO_0000458280" evidence="3">
    <location>
        <begin position="43"/>
        <end position="55"/>
    </location>
</feature>
<feature type="peptide" id="PRO_0000458281" description="GLKLAF-II" evidence="3">
    <location>
        <begin position="56"/>
        <end position="61"/>
    </location>
</feature>
<feature type="propeptide" id="PRO_0000458282" evidence="3">
    <location>
        <begin position="62"/>
        <end position="74"/>
    </location>
</feature>
<feature type="peptide" id="PRO_0000458283" description="GLKLAF-III" evidence="3">
    <location>
        <begin position="75"/>
        <end position="80"/>
    </location>
</feature>
<feature type="propeptide" id="PRO_0000458284" evidence="3">
    <location>
        <begin position="81"/>
        <end position="93"/>
    </location>
</feature>
<feature type="peptide" id="PRO_0000458285" description="GLKLAF-IV" evidence="3">
    <location>
        <begin position="94"/>
        <end position="99"/>
    </location>
</feature>
<feature type="propeptide" id="PRO_0000458286" evidence="3">
    <location>
        <begin position="100"/>
        <end position="112"/>
    </location>
</feature>
<feature type="peptide" id="PRO_0000458287" description="GLKLAF-V" evidence="3">
    <location>
        <begin position="113"/>
        <end position="118"/>
    </location>
</feature>
<feature type="propeptide" id="PRO_0000458288" evidence="3">
    <location>
        <begin position="119"/>
        <end position="131"/>
    </location>
</feature>
<feature type="peptide" id="PRO_0000458289" description="GLKLAF-VI" evidence="3">
    <location>
        <begin position="132"/>
        <end position="137"/>
    </location>
</feature>
<feature type="propeptide" id="PRO_0000458290" evidence="3">
    <location>
        <begin position="138"/>
        <end position="150"/>
    </location>
</feature>
<feature type="peptide" id="PRO_0000458291" description="GLKLAF-VII" evidence="3">
    <location>
        <begin position="151"/>
        <end position="156"/>
    </location>
</feature>
<dbReference type="EMBL" id="KI969273">
    <property type="protein sequence ID" value="EUN20373.1"/>
    <property type="molecule type" value="Genomic_DNA"/>
</dbReference>
<dbReference type="RefSeq" id="XP_014549947.1">
    <property type="nucleotide sequence ID" value="XM_014694461.1"/>
</dbReference>
<dbReference type="GeneID" id="26254982"/>
<dbReference type="HOGENOM" id="CLU_3037824_0_0_1"/>
<dbReference type="Proteomes" id="UP000054337">
    <property type="component" value="Unassembled WGS sequence"/>
</dbReference>
<gene>
    <name evidence="2" type="primary">vicA1</name>
    <name type="ORF">COCVIDRAFT_32336</name>
</gene>
<name>VICA1_BIPV3</name>